<evidence type="ECO:0000255" key="1">
    <source>
        <dbReference type="HAMAP-Rule" id="MF_01588"/>
    </source>
</evidence>
<organism>
    <name type="scientific">Mycobacteroides abscessus (strain ATCC 19977 / DSM 44196 / CCUG 20993 / CIP 104536 / JCM 13569 / NCTC 13031 / TMC 1543 / L948)</name>
    <name type="common">Mycobacterium abscessus</name>
    <dbReference type="NCBI Taxonomy" id="561007"/>
    <lineage>
        <taxon>Bacteria</taxon>
        <taxon>Bacillati</taxon>
        <taxon>Actinomycetota</taxon>
        <taxon>Actinomycetes</taxon>
        <taxon>Mycobacteriales</taxon>
        <taxon>Mycobacteriaceae</taxon>
        <taxon>Mycobacteroides</taxon>
        <taxon>Mycobacteroides abscessus</taxon>
    </lineage>
</organism>
<protein>
    <recommendedName>
        <fullName evidence="1">DNA ligase</fullName>
        <ecNumber evidence="1">6.5.1.2</ecNumber>
    </recommendedName>
    <alternativeName>
        <fullName evidence="1">Polydeoxyribonucleotide synthase [NAD(+)]</fullName>
    </alternativeName>
</protein>
<reference key="1">
    <citation type="journal article" date="2009" name="PLoS ONE">
        <title>Non mycobacterial virulence genes in the genome of the emerging pathogen Mycobacterium abscessus.</title>
        <authorList>
            <person name="Ripoll F."/>
            <person name="Pasek S."/>
            <person name="Schenowitz C."/>
            <person name="Dossat C."/>
            <person name="Barbe V."/>
            <person name="Rottman M."/>
            <person name="Macheras E."/>
            <person name="Heym B."/>
            <person name="Herrmann J.L."/>
            <person name="Daffe M."/>
            <person name="Brosch R."/>
            <person name="Risler J.L."/>
            <person name="Gaillard J.L."/>
        </authorList>
    </citation>
    <scope>NUCLEOTIDE SEQUENCE [LARGE SCALE GENOMIC DNA]</scope>
    <source>
        <strain>ATCC 19977 / DSM 44196 / CCUG 20993 / CIP 104536 / JCM 13569 / NCTC 13031 / TMC 1543 / L948</strain>
    </source>
</reference>
<sequence>MDSDIQRQWGELAEEVRGHQFRYYVKDAPVISDGQFDELLRRLTALEEQYPELRTPDSPTQLVGGAGFVTEFRSVDHLERMLSLDNAFSSDELTAWDARVRGDIGQEPEYLCELKIDGVALSLVYENGVLVRGATRGDGRSGEDVTLNARTIEDVPERLAKSEKYPIPALLEVRGEVFFRLEDFEALNASLVEESKPPFANPRNSAAGSLRQKNPAITARRRLRMICHGLGRAEGFSPESLHDAYLALGEWGLPVSTHTTKVRGIAKVQERVNYWAEHRHDVEHEIDGVVVKVDTVALQRRLGSTSRAPRWAIAYKYPPEEATTELLDIRVSVGRTGRVTPFAYMTPVKVAGSTVSLATLHNASEVKRKGVLIGDTVVIRKAGDVIPEVLGPVADLRNGNEREFVMPTACPECGTTLAHEKEGDADIRCPNSRSCPAQLRERVFHVAGRGAFDIEALGYEAAIALLAAGVIEDEGDLFGLTADDLLRTDLFKTKSGALSANGARLLDNLDKAKQQPLWRVLVALSIRHVGPTAARALATEFGDLEAIEGASVEQLAAVEGVGATIAAAVVDWFSVDWHRAIVDKWRAAGVRTADERDDSIPRNLEGLSIVVTGSLPGFSRDEAKEAIIARGGKSASSVSKKTAFVVVGDSPGSKYDKAVELGVTILDEDGFRALLADGPPA</sequence>
<feature type="chain" id="PRO_0000380424" description="DNA ligase">
    <location>
        <begin position="1"/>
        <end position="681"/>
    </location>
</feature>
<feature type="domain" description="BRCT" evidence="1">
    <location>
        <begin position="599"/>
        <end position="681"/>
    </location>
</feature>
<feature type="active site" description="N6-AMP-lysine intermediate" evidence="1">
    <location>
        <position position="115"/>
    </location>
</feature>
<feature type="binding site" evidence="1">
    <location>
        <begin position="33"/>
        <end position="37"/>
    </location>
    <ligand>
        <name>NAD(+)</name>
        <dbReference type="ChEBI" id="CHEBI:57540"/>
    </ligand>
</feature>
<feature type="binding site" evidence="1">
    <location>
        <begin position="83"/>
        <end position="84"/>
    </location>
    <ligand>
        <name>NAD(+)</name>
        <dbReference type="ChEBI" id="CHEBI:57540"/>
    </ligand>
</feature>
<feature type="binding site" evidence="1">
    <location>
        <position position="113"/>
    </location>
    <ligand>
        <name>NAD(+)</name>
        <dbReference type="ChEBI" id="CHEBI:57540"/>
    </ligand>
</feature>
<feature type="binding site" evidence="1">
    <location>
        <position position="136"/>
    </location>
    <ligand>
        <name>NAD(+)</name>
        <dbReference type="ChEBI" id="CHEBI:57540"/>
    </ligand>
</feature>
<feature type="binding site" evidence="1">
    <location>
        <position position="176"/>
    </location>
    <ligand>
        <name>NAD(+)</name>
        <dbReference type="ChEBI" id="CHEBI:57540"/>
    </ligand>
</feature>
<feature type="binding site" evidence="1">
    <location>
        <position position="292"/>
    </location>
    <ligand>
        <name>NAD(+)</name>
        <dbReference type="ChEBI" id="CHEBI:57540"/>
    </ligand>
</feature>
<feature type="binding site" evidence="1">
    <location>
        <position position="316"/>
    </location>
    <ligand>
        <name>NAD(+)</name>
        <dbReference type="ChEBI" id="CHEBI:57540"/>
    </ligand>
</feature>
<feature type="binding site" evidence="1">
    <location>
        <position position="410"/>
    </location>
    <ligand>
        <name>Zn(2+)</name>
        <dbReference type="ChEBI" id="CHEBI:29105"/>
    </ligand>
</feature>
<feature type="binding site" evidence="1">
    <location>
        <position position="413"/>
    </location>
    <ligand>
        <name>Zn(2+)</name>
        <dbReference type="ChEBI" id="CHEBI:29105"/>
    </ligand>
</feature>
<feature type="binding site" evidence="1">
    <location>
        <position position="429"/>
    </location>
    <ligand>
        <name>Zn(2+)</name>
        <dbReference type="ChEBI" id="CHEBI:29105"/>
    </ligand>
</feature>
<feature type="binding site" evidence="1">
    <location>
        <position position="435"/>
    </location>
    <ligand>
        <name>Zn(2+)</name>
        <dbReference type="ChEBI" id="CHEBI:29105"/>
    </ligand>
</feature>
<dbReference type="EC" id="6.5.1.2" evidence="1"/>
<dbReference type="EMBL" id="CU458896">
    <property type="protein sequence ID" value="CAM63421.1"/>
    <property type="molecule type" value="Genomic_DNA"/>
</dbReference>
<dbReference type="RefSeq" id="WP_005111766.1">
    <property type="nucleotide sequence ID" value="NZ_MLCG01000001.1"/>
</dbReference>
<dbReference type="SMR" id="B1MDV2"/>
<dbReference type="GeneID" id="93380281"/>
<dbReference type="KEGG" id="mab:MAB_3345c"/>
<dbReference type="Proteomes" id="UP000007137">
    <property type="component" value="Chromosome"/>
</dbReference>
<dbReference type="GO" id="GO:0005829">
    <property type="term" value="C:cytosol"/>
    <property type="evidence" value="ECO:0007669"/>
    <property type="project" value="TreeGrafter"/>
</dbReference>
<dbReference type="GO" id="GO:0003911">
    <property type="term" value="F:DNA ligase (NAD+) activity"/>
    <property type="evidence" value="ECO:0007669"/>
    <property type="project" value="UniProtKB-UniRule"/>
</dbReference>
<dbReference type="GO" id="GO:0046872">
    <property type="term" value="F:metal ion binding"/>
    <property type="evidence" value="ECO:0007669"/>
    <property type="project" value="UniProtKB-KW"/>
</dbReference>
<dbReference type="GO" id="GO:0006281">
    <property type="term" value="P:DNA repair"/>
    <property type="evidence" value="ECO:0007669"/>
    <property type="project" value="UniProtKB-KW"/>
</dbReference>
<dbReference type="GO" id="GO:0006260">
    <property type="term" value="P:DNA replication"/>
    <property type="evidence" value="ECO:0007669"/>
    <property type="project" value="UniProtKB-KW"/>
</dbReference>
<dbReference type="CDD" id="cd17748">
    <property type="entry name" value="BRCT_DNA_ligase_like"/>
    <property type="match status" value="1"/>
</dbReference>
<dbReference type="CDD" id="cd00114">
    <property type="entry name" value="LIGANc"/>
    <property type="match status" value="1"/>
</dbReference>
<dbReference type="FunFam" id="1.10.150.20:FF:000006">
    <property type="entry name" value="DNA ligase"/>
    <property type="match status" value="1"/>
</dbReference>
<dbReference type="FunFam" id="1.10.287.610:FF:000002">
    <property type="entry name" value="DNA ligase"/>
    <property type="match status" value="1"/>
</dbReference>
<dbReference type="FunFam" id="2.40.50.140:FF:000012">
    <property type="entry name" value="DNA ligase"/>
    <property type="match status" value="1"/>
</dbReference>
<dbReference type="FunFam" id="3.30.470.30:FF:000001">
    <property type="entry name" value="DNA ligase"/>
    <property type="match status" value="1"/>
</dbReference>
<dbReference type="FunFam" id="3.40.50.10190:FF:000054">
    <property type="entry name" value="DNA ligase"/>
    <property type="match status" value="1"/>
</dbReference>
<dbReference type="Gene3D" id="6.20.10.30">
    <property type="match status" value="1"/>
</dbReference>
<dbReference type="Gene3D" id="1.10.150.20">
    <property type="entry name" value="5' to 3' exonuclease, C-terminal subdomain"/>
    <property type="match status" value="2"/>
</dbReference>
<dbReference type="Gene3D" id="3.40.50.10190">
    <property type="entry name" value="BRCT domain"/>
    <property type="match status" value="1"/>
</dbReference>
<dbReference type="Gene3D" id="3.30.470.30">
    <property type="entry name" value="DNA ligase/mRNA capping enzyme"/>
    <property type="match status" value="1"/>
</dbReference>
<dbReference type="Gene3D" id="1.10.287.610">
    <property type="entry name" value="Helix hairpin bin"/>
    <property type="match status" value="1"/>
</dbReference>
<dbReference type="Gene3D" id="2.40.50.140">
    <property type="entry name" value="Nucleic acid-binding proteins"/>
    <property type="match status" value="1"/>
</dbReference>
<dbReference type="HAMAP" id="MF_01588">
    <property type="entry name" value="DNA_ligase_A"/>
    <property type="match status" value="1"/>
</dbReference>
<dbReference type="InterPro" id="IPR001357">
    <property type="entry name" value="BRCT_dom"/>
</dbReference>
<dbReference type="InterPro" id="IPR036420">
    <property type="entry name" value="BRCT_dom_sf"/>
</dbReference>
<dbReference type="InterPro" id="IPR041663">
    <property type="entry name" value="DisA/LigA_HHH"/>
</dbReference>
<dbReference type="InterPro" id="IPR001679">
    <property type="entry name" value="DNA_ligase"/>
</dbReference>
<dbReference type="InterPro" id="IPR018239">
    <property type="entry name" value="DNA_ligase_AS"/>
</dbReference>
<dbReference type="InterPro" id="IPR033136">
    <property type="entry name" value="DNA_ligase_CS"/>
</dbReference>
<dbReference type="InterPro" id="IPR013839">
    <property type="entry name" value="DNAligase_adenylation"/>
</dbReference>
<dbReference type="InterPro" id="IPR013840">
    <property type="entry name" value="DNAligase_N"/>
</dbReference>
<dbReference type="InterPro" id="IPR012340">
    <property type="entry name" value="NA-bd_OB-fold"/>
</dbReference>
<dbReference type="InterPro" id="IPR004150">
    <property type="entry name" value="NAD_DNA_ligase_OB"/>
</dbReference>
<dbReference type="InterPro" id="IPR010994">
    <property type="entry name" value="RuvA_2-like"/>
</dbReference>
<dbReference type="InterPro" id="IPR004149">
    <property type="entry name" value="Znf_DNAligase_C4"/>
</dbReference>
<dbReference type="NCBIfam" id="TIGR00575">
    <property type="entry name" value="dnlj"/>
    <property type="match status" value="1"/>
</dbReference>
<dbReference type="NCBIfam" id="NF005932">
    <property type="entry name" value="PRK07956.1"/>
    <property type="match status" value="1"/>
</dbReference>
<dbReference type="PANTHER" id="PTHR23389">
    <property type="entry name" value="CHROMOSOME TRANSMISSION FIDELITY FACTOR 18"/>
    <property type="match status" value="1"/>
</dbReference>
<dbReference type="PANTHER" id="PTHR23389:SF9">
    <property type="entry name" value="DNA LIGASE"/>
    <property type="match status" value="1"/>
</dbReference>
<dbReference type="Pfam" id="PF00533">
    <property type="entry name" value="BRCT"/>
    <property type="match status" value="1"/>
</dbReference>
<dbReference type="Pfam" id="PF01653">
    <property type="entry name" value="DNA_ligase_aden"/>
    <property type="match status" value="1"/>
</dbReference>
<dbReference type="Pfam" id="PF03120">
    <property type="entry name" value="DNA_ligase_OB"/>
    <property type="match status" value="1"/>
</dbReference>
<dbReference type="Pfam" id="PF03119">
    <property type="entry name" value="DNA_ligase_ZBD"/>
    <property type="match status" value="1"/>
</dbReference>
<dbReference type="Pfam" id="PF12826">
    <property type="entry name" value="HHH_2"/>
    <property type="match status" value="1"/>
</dbReference>
<dbReference type="Pfam" id="PF22745">
    <property type="entry name" value="Nlig-Ia"/>
    <property type="match status" value="1"/>
</dbReference>
<dbReference type="PIRSF" id="PIRSF001604">
    <property type="entry name" value="LigA"/>
    <property type="match status" value="1"/>
</dbReference>
<dbReference type="SMART" id="SM00292">
    <property type="entry name" value="BRCT"/>
    <property type="match status" value="1"/>
</dbReference>
<dbReference type="SMART" id="SM00532">
    <property type="entry name" value="LIGANc"/>
    <property type="match status" value="1"/>
</dbReference>
<dbReference type="SUPFAM" id="SSF52113">
    <property type="entry name" value="BRCT domain"/>
    <property type="match status" value="1"/>
</dbReference>
<dbReference type="SUPFAM" id="SSF56091">
    <property type="entry name" value="DNA ligase/mRNA capping enzyme, catalytic domain"/>
    <property type="match status" value="1"/>
</dbReference>
<dbReference type="SUPFAM" id="SSF50249">
    <property type="entry name" value="Nucleic acid-binding proteins"/>
    <property type="match status" value="1"/>
</dbReference>
<dbReference type="SUPFAM" id="SSF47781">
    <property type="entry name" value="RuvA domain 2-like"/>
    <property type="match status" value="1"/>
</dbReference>
<dbReference type="PROSITE" id="PS50172">
    <property type="entry name" value="BRCT"/>
    <property type="match status" value="1"/>
</dbReference>
<dbReference type="PROSITE" id="PS01055">
    <property type="entry name" value="DNA_LIGASE_N1"/>
    <property type="match status" value="1"/>
</dbReference>
<dbReference type="PROSITE" id="PS01056">
    <property type="entry name" value="DNA_LIGASE_N2"/>
    <property type="match status" value="1"/>
</dbReference>
<proteinExistence type="inferred from homology"/>
<keyword id="KW-0227">DNA damage</keyword>
<keyword id="KW-0234">DNA repair</keyword>
<keyword id="KW-0235">DNA replication</keyword>
<keyword id="KW-0436">Ligase</keyword>
<keyword id="KW-0460">Magnesium</keyword>
<keyword id="KW-0464">Manganese</keyword>
<keyword id="KW-0479">Metal-binding</keyword>
<keyword id="KW-0520">NAD</keyword>
<keyword id="KW-1185">Reference proteome</keyword>
<keyword id="KW-0862">Zinc</keyword>
<comment type="function">
    <text evidence="1">DNA ligase that catalyzes the formation of phosphodiester linkages between 5'-phosphoryl and 3'-hydroxyl groups in double-stranded DNA using NAD as a coenzyme and as the energy source for the reaction. It is essential for DNA replication and repair of damaged DNA.</text>
</comment>
<comment type="catalytic activity">
    <reaction evidence="1">
        <text>NAD(+) + (deoxyribonucleotide)n-3'-hydroxyl + 5'-phospho-(deoxyribonucleotide)m = (deoxyribonucleotide)n+m + AMP + beta-nicotinamide D-nucleotide.</text>
        <dbReference type="EC" id="6.5.1.2"/>
    </reaction>
</comment>
<comment type="cofactor">
    <cofactor evidence="1">
        <name>Mg(2+)</name>
        <dbReference type="ChEBI" id="CHEBI:18420"/>
    </cofactor>
    <cofactor evidence="1">
        <name>Mn(2+)</name>
        <dbReference type="ChEBI" id="CHEBI:29035"/>
    </cofactor>
</comment>
<comment type="similarity">
    <text evidence="1">Belongs to the NAD-dependent DNA ligase family. LigA subfamily.</text>
</comment>
<name>DNLJ_MYCA9</name>
<gene>
    <name evidence="1" type="primary">ligA</name>
    <name type="ordered locus">MAB_3345c</name>
</gene>
<accession>B1MDV2</accession>